<comment type="function">
    <text evidence="1">Catalyzes the transfer of an acyl group from acyl-phosphate (acyl-PO(4)) to glycerol-3-phosphate (G3P) to form lysophosphatidic acid (LPA). This enzyme utilizes acyl-phosphate as fatty acyl donor, but not acyl-CoA or acyl-ACP.</text>
</comment>
<comment type="catalytic activity">
    <reaction evidence="1">
        <text>an acyl phosphate + sn-glycerol 3-phosphate = a 1-acyl-sn-glycero-3-phosphate + phosphate</text>
        <dbReference type="Rhea" id="RHEA:34075"/>
        <dbReference type="ChEBI" id="CHEBI:43474"/>
        <dbReference type="ChEBI" id="CHEBI:57597"/>
        <dbReference type="ChEBI" id="CHEBI:57970"/>
        <dbReference type="ChEBI" id="CHEBI:59918"/>
        <dbReference type="EC" id="2.3.1.275"/>
    </reaction>
</comment>
<comment type="pathway">
    <text evidence="1">Lipid metabolism; phospholipid metabolism.</text>
</comment>
<comment type="subunit">
    <text evidence="1">Probably interacts with PlsX.</text>
</comment>
<comment type="subcellular location">
    <subcellularLocation>
        <location evidence="1">Cell inner membrane</location>
        <topology evidence="1">Multi-pass membrane protein</topology>
    </subcellularLocation>
</comment>
<comment type="similarity">
    <text evidence="1">Belongs to the PlsY family.</text>
</comment>
<name>PLSY_SHEB5</name>
<protein>
    <recommendedName>
        <fullName evidence="1">Glycerol-3-phosphate acyltransferase</fullName>
    </recommendedName>
    <alternativeName>
        <fullName evidence="1">Acyl-PO4 G3P acyltransferase</fullName>
    </alternativeName>
    <alternativeName>
        <fullName evidence="1">Acyl-phosphate--glycerol-3-phosphate acyltransferase</fullName>
    </alternativeName>
    <alternativeName>
        <fullName evidence="1">G3P acyltransferase</fullName>
        <shortName evidence="1">GPAT</shortName>
        <ecNumber evidence="1">2.3.1.275</ecNumber>
    </alternativeName>
    <alternativeName>
        <fullName evidence="1">Lysophosphatidic acid synthase</fullName>
        <shortName evidence="1">LPA synthase</shortName>
    </alternativeName>
</protein>
<sequence length="203" mass="21672">MSPLTQTLLMILAAYLAGSISSAVLVCRMRGLPDPRLQGSGNPGATNVLRIGGASSAAMVLFFDMLKGAVPSYLAYLMGIDAVSLGLIAIAACLGHIYPVFFGFKGGKGVATAFGAMAPIGDDLAICLMASWVVLLLISRYSSLAAILTALLAPLYTWWLDDRFTIPVAMLSTLIIIRHKDNIQRLLKGEESKVSRKKRPKKS</sequence>
<keyword id="KW-0997">Cell inner membrane</keyword>
<keyword id="KW-1003">Cell membrane</keyword>
<keyword id="KW-0444">Lipid biosynthesis</keyword>
<keyword id="KW-0443">Lipid metabolism</keyword>
<keyword id="KW-0472">Membrane</keyword>
<keyword id="KW-0594">Phospholipid biosynthesis</keyword>
<keyword id="KW-1208">Phospholipid metabolism</keyword>
<keyword id="KW-1185">Reference proteome</keyword>
<keyword id="KW-0808">Transferase</keyword>
<keyword id="KW-0812">Transmembrane</keyword>
<keyword id="KW-1133">Transmembrane helix</keyword>
<reference key="1">
    <citation type="submission" date="2007-02" db="EMBL/GenBank/DDBJ databases">
        <title>Complete sequence of chromosome of Shewanella baltica OS155.</title>
        <authorList>
            <consortium name="US DOE Joint Genome Institute"/>
            <person name="Copeland A."/>
            <person name="Lucas S."/>
            <person name="Lapidus A."/>
            <person name="Barry K."/>
            <person name="Detter J.C."/>
            <person name="Glavina del Rio T."/>
            <person name="Hammon N."/>
            <person name="Israni S."/>
            <person name="Dalin E."/>
            <person name="Tice H."/>
            <person name="Pitluck S."/>
            <person name="Sims D.R."/>
            <person name="Brettin T."/>
            <person name="Bruce D."/>
            <person name="Han C."/>
            <person name="Tapia R."/>
            <person name="Brainard J."/>
            <person name="Schmutz J."/>
            <person name="Larimer F."/>
            <person name="Land M."/>
            <person name="Hauser L."/>
            <person name="Kyrpides N."/>
            <person name="Mikhailova N."/>
            <person name="Brettar I."/>
            <person name="Klappenbach J."/>
            <person name="Konstantinidis K."/>
            <person name="Rodrigues J."/>
            <person name="Tiedje J."/>
            <person name="Richardson P."/>
        </authorList>
    </citation>
    <scope>NUCLEOTIDE SEQUENCE [LARGE SCALE GENOMIC DNA]</scope>
    <source>
        <strain>OS155 / ATCC BAA-1091</strain>
    </source>
</reference>
<proteinExistence type="inferred from homology"/>
<evidence type="ECO:0000255" key="1">
    <source>
        <dbReference type="HAMAP-Rule" id="MF_01043"/>
    </source>
</evidence>
<accession>A3D1Q5</accession>
<organism>
    <name type="scientific">Shewanella baltica (strain OS155 / ATCC BAA-1091)</name>
    <dbReference type="NCBI Taxonomy" id="325240"/>
    <lineage>
        <taxon>Bacteria</taxon>
        <taxon>Pseudomonadati</taxon>
        <taxon>Pseudomonadota</taxon>
        <taxon>Gammaproteobacteria</taxon>
        <taxon>Alteromonadales</taxon>
        <taxon>Shewanellaceae</taxon>
        <taxon>Shewanella</taxon>
    </lineage>
</organism>
<feature type="chain" id="PRO_1000064220" description="Glycerol-3-phosphate acyltransferase">
    <location>
        <begin position="1"/>
        <end position="203"/>
    </location>
</feature>
<feature type="transmembrane region" description="Helical" evidence="1">
    <location>
        <begin position="7"/>
        <end position="27"/>
    </location>
</feature>
<feature type="transmembrane region" description="Helical" evidence="1">
    <location>
        <begin position="82"/>
        <end position="102"/>
    </location>
</feature>
<feature type="transmembrane region" description="Helical" evidence="1">
    <location>
        <begin position="118"/>
        <end position="138"/>
    </location>
</feature>
<feature type="transmembrane region" description="Helical" evidence="1">
    <location>
        <begin position="141"/>
        <end position="161"/>
    </location>
</feature>
<gene>
    <name evidence="1" type="primary">plsY</name>
    <name type="ordered locus">Sbal_1149</name>
</gene>
<dbReference type="EC" id="2.3.1.275" evidence="1"/>
<dbReference type="EMBL" id="CP000563">
    <property type="protein sequence ID" value="ABN60668.1"/>
    <property type="molecule type" value="Genomic_DNA"/>
</dbReference>
<dbReference type="RefSeq" id="WP_006080727.1">
    <property type="nucleotide sequence ID" value="NC_009052.1"/>
</dbReference>
<dbReference type="SMR" id="A3D1Q5"/>
<dbReference type="STRING" id="325240.Sbal_1149"/>
<dbReference type="GeneID" id="11771502"/>
<dbReference type="KEGG" id="sbl:Sbal_1149"/>
<dbReference type="HOGENOM" id="CLU_081254_0_2_6"/>
<dbReference type="OrthoDB" id="9777124at2"/>
<dbReference type="UniPathway" id="UPA00085"/>
<dbReference type="Proteomes" id="UP000001557">
    <property type="component" value="Chromosome"/>
</dbReference>
<dbReference type="GO" id="GO:0005886">
    <property type="term" value="C:plasma membrane"/>
    <property type="evidence" value="ECO:0007669"/>
    <property type="project" value="UniProtKB-SubCell"/>
</dbReference>
<dbReference type="GO" id="GO:0043772">
    <property type="term" value="F:acyl-phosphate glycerol-3-phosphate acyltransferase activity"/>
    <property type="evidence" value="ECO:0007669"/>
    <property type="project" value="UniProtKB-UniRule"/>
</dbReference>
<dbReference type="GO" id="GO:0008654">
    <property type="term" value="P:phospholipid biosynthetic process"/>
    <property type="evidence" value="ECO:0007669"/>
    <property type="project" value="UniProtKB-UniRule"/>
</dbReference>
<dbReference type="HAMAP" id="MF_01043">
    <property type="entry name" value="PlsY"/>
    <property type="match status" value="1"/>
</dbReference>
<dbReference type="InterPro" id="IPR003811">
    <property type="entry name" value="G3P_acylTferase_PlsY"/>
</dbReference>
<dbReference type="NCBIfam" id="TIGR00023">
    <property type="entry name" value="glycerol-3-phosphate 1-O-acyltransferase PlsY"/>
    <property type="match status" value="1"/>
</dbReference>
<dbReference type="PANTHER" id="PTHR30309:SF0">
    <property type="entry name" value="GLYCEROL-3-PHOSPHATE ACYLTRANSFERASE-RELATED"/>
    <property type="match status" value="1"/>
</dbReference>
<dbReference type="PANTHER" id="PTHR30309">
    <property type="entry name" value="INNER MEMBRANE PROTEIN YGIH"/>
    <property type="match status" value="1"/>
</dbReference>
<dbReference type="Pfam" id="PF02660">
    <property type="entry name" value="G3P_acyltransf"/>
    <property type="match status" value="1"/>
</dbReference>
<dbReference type="SMART" id="SM01207">
    <property type="entry name" value="G3P_acyltransf"/>
    <property type="match status" value="1"/>
</dbReference>